<keyword id="KW-0067">ATP-binding</keyword>
<keyword id="KW-0173">Coenzyme A biosynthesis</keyword>
<keyword id="KW-0963">Cytoplasm</keyword>
<keyword id="KW-0460">Magnesium</keyword>
<keyword id="KW-0547">Nucleotide-binding</keyword>
<keyword id="KW-0548">Nucleotidyltransferase</keyword>
<keyword id="KW-0808">Transferase</keyword>
<reference key="1">
    <citation type="submission" date="2008-12" db="EMBL/GenBank/DDBJ databases">
        <title>Complete sequence of chromosome of Shewanella baltica OS223.</title>
        <authorList>
            <consortium name="US DOE Joint Genome Institute"/>
            <person name="Lucas S."/>
            <person name="Copeland A."/>
            <person name="Lapidus A."/>
            <person name="Glavina del Rio T."/>
            <person name="Dalin E."/>
            <person name="Tice H."/>
            <person name="Bruce D."/>
            <person name="Goodwin L."/>
            <person name="Pitluck S."/>
            <person name="Chertkov O."/>
            <person name="Meincke L."/>
            <person name="Brettin T."/>
            <person name="Detter J.C."/>
            <person name="Han C."/>
            <person name="Kuske C.R."/>
            <person name="Larimer F."/>
            <person name="Land M."/>
            <person name="Hauser L."/>
            <person name="Kyrpides N."/>
            <person name="Ovchinnikova G."/>
            <person name="Brettar I."/>
            <person name="Rodrigues J."/>
            <person name="Konstantinidis K."/>
            <person name="Tiedje J."/>
        </authorList>
    </citation>
    <scope>NUCLEOTIDE SEQUENCE [LARGE SCALE GENOMIC DNA]</scope>
    <source>
        <strain>OS223</strain>
    </source>
</reference>
<comment type="function">
    <text evidence="1">Reversibly transfers an adenylyl group from ATP to 4'-phosphopantetheine, yielding dephospho-CoA (dPCoA) and pyrophosphate.</text>
</comment>
<comment type="catalytic activity">
    <reaction evidence="1">
        <text>(R)-4'-phosphopantetheine + ATP + H(+) = 3'-dephospho-CoA + diphosphate</text>
        <dbReference type="Rhea" id="RHEA:19801"/>
        <dbReference type="ChEBI" id="CHEBI:15378"/>
        <dbReference type="ChEBI" id="CHEBI:30616"/>
        <dbReference type="ChEBI" id="CHEBI:33019"/>
        <dbReference type="ChEBI" id="CHEBI:57328"/>
        <dbReference type="ChEBI" id="CHEBI:61723"/>
        <dbReference type="EC" id="2.7.7.3"/>
    </reaction>
</comment>
<comment type="cofactor">
    <cofactor evidence="1">
        <name>Mg(2+)</name>
        <dbReference type="ChEBI" id="CHEBI:18420"/>
    </cofactor>
</comment>
<comment type="pathway">
    <text evidence="1">Cofactor biosynthesis; coenzyme A biosynthesis; CoA from (R)-pantothenate: step 4/5.</text>
</comment>
<comment type="subunit">
    <text evidence="1">Homohexamer.</text>
</comment>
<comment type="subcellular location">
    <subcellularLocation>
        <location evidence="1">Cytoplasm</location>
    </subcellularLocation>
</comment>
<comment type="similarity">
    <text evidence="1">Belongs to the bacterial CoaD family.</text>
</comment>
<dbReference type="EC" id="2.7.7.3" evidence="1"/>
<dbReference type="EMBL" id="CP001252">
    <property type="protein sequence ID" value="ACK48742.1"/>
    <property type="molecule type" value="Genomic_DNA"/>
</dbReference>
<dbReference type="RefSeq" id="WP_012090652.1">
    <property type="nucleotide sequence ID" value="NC_011663.1"/>
</dbReference>
<dbReference type="SMR" id="B8EDR6"/>
<dbReference type="KEGG" id="sbp:Sbal223_4276"/>
<dbReference type="HOGENOM" id="CLU_100149_0_1_6"/>
<dbReference type="UniPathway" id="UPA00241">
    <property type="reaction ID" value="UER00355"/>
</dbReference>
<dbReference type="Proteomes" id="UP000002507">
    <property type="component" value="Chromosome"/>
</dbReference>
<dbReference type="GO" id="GO:0005737">
    <property type="term" value="C:cytoplasm"/>
    <property type="evidence" value="ECO:0007669"/>
    <property type="project" value="UniProtKB-SubCell"/>
</dbReference>
<dbReference type="GO" id="GO:0005524">
    <property type="term" value="F:ATP binding"/>
    <property type="evidence" value="ECO:0007669"/>
    <property type="project" value="UniProtKB-KW"/>
</dbReference>
<dbReference type="GO" id="GO:0004595">
    <property type="term" value="F:pantetheine-phosphate adenylyltransferase activity"/>
    <property type="evidence" value="ECO:0007669"/>
    <property type="project" value="UniProtKB-UniRule"/>
</dbReference>
<dbReference type="GO" id="GO:0015937">
    <property type="term" value="P:coenzyme A biosynthetic process"/>
    <property type="evidence" value="ECO:0007669"/>
    <property type="project" value="UniProtKB-UniRule"/>
</dbReference>
<dbReference type="CDD" id="cd02163">
    <property type="entry name" value="PPAT"/>
    <property type="match status" value="1"/>
</dbReference>
<dbReference type="FunFam" id="3.40.50.620:FF:000012">
    <property type="entry name" value="Phosphopantetheine adenylyltransferase"/>
    <property type="match status" value="1"/>
</dbReference>
<dbReference type="Gene3D" id="3.40.50.620">
    <property type="entry name" value="HUPs"/>
    <property type="match status" value="1"/>
</dbReference>
<dbReference type="HAMAP" id="MF_00151">
    <property type="entry name" value="PPAT_bact"/>
    <property type="match status" value="1"/>
</dbReference>
<dbReference type="InterPro" id="IPR004821">
    <property type="entry name" value="Cyt_trans-like"/>
</dbReference>
<dbReference type="InterPro" id="IPR001980">
    <property type="entry name" value="PPAT"/>
</dbReference>
<dbReference type="InterPro" id="IPR014729">
    <property type="entry name" value="Rossmann-like_a/b/a_fold"/>
</dbReference>
<dbReference type="NCBIfam" id="TIGR01510">
    <property type="entry name" value="coaD_prev_kdtB"/>
    <property type="match status" value="1"/>
</dbReference>
<dbReference type="NCBIfam" id="TIGR00125">
    <property type="entry name" value="cyt_tran_rel"/>
    <property type="match status" value="1"/>
</dbReference>
<dbReference type="PANTHER" id="PTHR21342">
    <property type="entry name" value="PHOSPHOPANTETHEINE ADENYLYLTRANSFERASE"/>
    <property type="match status" value="1"/>
</dbReference>
<dbReference type="PANTHER" id="PTHR21342:SF1">
    <property type="entry name" value="PHOSPHOPANTETHEINE ADENYLYLTRANSFERASE"/>
    <property type="match status" value="1"/>
</dbReference>
<dbReference type="Pfam" id="PF01467">
    <property type="entry name" value="CTP_transf_like"/>
    <property type="match status" value="1"/>
</dbReference>
<dbReference type="PRINTS" id="PR01020">
    <property type="entry name" value="LPSBIOSNTHSS"/>
</dbReference>
<dbReference type="SUPFAM" id="SSF52374">
    <property type="entry name" value="Nucleotidylyl transferase"/>
    <property type="match status" value="1"/>
</dbReference>
<accession>B8EDR6</accession>
<protein>
    <recommendedName>
        <fullName evidence="1">Phosphopantetheine adenylyltransferase</fullName>
        <ecNumber evidence="1">2.7.7.3</ecNumber>
    </recommendedName>
    <alternativeName>
        <fullName evidence="1">Dephospho-CoA pyrophosphorylase</fullName>
    </alternativeName>
    <alternativeName>
        <fullName evidence="1">Pantetheine-phosphate adenylyltransferase</fullName>
        <shortName evidence="1">PPAT</shortName>
    </alternativeName>
</protein>
<proteinExistence type="inferred from homology"/>
<sequence length="163" mass="17980">MHTRAIYPGTFDPITNGHADLIERAAKLFKHVIIGIAANPSKQPRFTLEERVELVNRVTAHLDNVEVVGFSGLLVDFAKEQKASVLVRGLRAVSDFEYEFQLANMNRRLSPDLESVFLTPAEENSFISSTLVKEVALHGGDVNQFVHSEVATALAAKLKLAKP</sequence>
<name>COAD_SHEB2</name>
<gene>
    <name evidence="1" type="primary">coaD</name>
    <name type="ordered locus">Sbal223_4276</name>
</gene>
<organism>
    <name type="scientific">Shewanella baltica (strain OS223)</name>
    <dbReference type="NCBI Taxonomy" id="407976"/>
    <lineage>
        <taxon>Bacteria</taxon>
        <taxon>Pseudomonadati</taxon>
        <taxon>Pseudomonadota</taxon>
        <taxon>Gammaproteobacteria</taxon>
        <taxon>Alteromonadales</taxon>
        <taxon>Shewanellaceae</taxon>
        <taxon>Shewanella</taxon>
    </lineage>
</organism>
<feature type="chain" id="PRO_1000123299" description="Phosphopantetheine adenylyltransferase">
    <location>
        <begin position="1"/>
        <end position="163"/>
    </location>
</feature>
<feature type="binding site" evidence="1">
    <location>
        <begin position="10"/>
        <end position="11"/>
    </location>
    <ligand>
        <name>ATP</name>
        <dbReference type="ChEBI" id="CHEBI:30616"/>
    </ligand>
</feature>
<feature type="binding site" evidence="1">
    <location>
        <position position="10"/>
    </location>
    <ligand>
        <name>substrate</name>
    </ligand>
</feature>
<feature type="binding site" evidence="1">
    <location>
        <position position="18"/>
    </location>
    <ligand>
        <name>ATP</name>
        <dbReference type="ChEBI" id="CHEBI:30616"/>
    </ligand>
</feature>
<feature type="binding site" evidence="1">
    <location>
        <position position="42"/>
    </location>
    <ligand>
        <name>substrate</name>
    </ligand>
</feature>
<feature type="binding site" evidence="1">
    <location>
        <position position="74"/>
    </location>
    <ligand>
        <name>substrate</name>
    </ligand>
</feature>
<feature type="binding site" evidence="1">
    <location>
        <position position="88"/>
    </location>
    <ligand>
        <name>substrate</name>
    </ligand>
</feature>
<feature type="binding site" evidence="1">
    <location>
        <begin position="89"/>
        <end position="91"/>
    </location>
    <ligand>
        <name>ATP</name>
        <dbReference type="ChEBI" id="CHEBI:30616"/>
    </ligand>
</feature>
<feature type="binding site" evidence="1">
    <location>
        <position position="99"/>
    </location>
    <ligand>
        <name>ATP</name>
        <dbReference type="ChEBI" id="CHEBI:30616"/>
    </ligand>
</feature>
<feature type="binding site" evidence="1">
    <location>
        <begin position="124"/>
        <end position="130"/>
    </location>
    <ligand>
        <name>ATP</name>
        <dbReference type="ChEBI" id="CHEBI:30616"/>
    </ligand>
</feature>
<feature type="site" description="Transition state stabilizer" evidence="1">
    <location>
        <position position="18"/>
    </location>
</feature>
<evidence type="ECO:0000255" key="1">
    <source>
        <dbReference type="HAMAP-Rule" id="MF_00151"/>
    </source>
</evidence>